<reference key="1">
    <citation type="journal article" date="2001" name="Nature">
        <title>Genome sequence of enterohaemorrhagic Escherichia coli O157:H7.</title>
        <authorList>
            <person name="Perna N.T."/>
            <person name="Plunkett G. III"/>
            <person name="Burland V."/>
            <person name="Mau B."/>
            <person name="Glasner J.D."/>
            <person name="Rose D.J."/>
            <person name="Mayhew G.F."/>
            <person name="Evans P.S."/>
            <person name="Gregor J."/>
            <person name="Kirkpatrick H.A."/>
            <person name="Posfai G."/>
            <person name="Hackett J."/>
            <person name="Klink S."/>
            <person name="Boutin A."/>
            <person name="Shao Y."/>
            <person name="Miller L."/>
            <person name="Grotbeck E.J."/>
            <person name="Davis N.W."/>
            <person name="Lim A."/>
            <person name="Dimalanta E.T."/>
            <person name="Potamousis K."/>
            <person name="Apodaca J."/>
            <person name="Anantharaman T.S."/>
            <person name="Lin J."/>
            <person name="Yen G."/>
            <person name="Schwartz D.C."/>
            <person name="Welch R.A."/>
            <person name="Blattner F.R."/>
        </authorList>
    </citation>
    <scope>NUCLEOTIDE SEQUENCE [LARGE SCALE GENOMIC DNA]</scope>
    <source>
        <strain>O157:H7 / EDL933 / ATCC 700927 / EHEC</strain>
    </source>
</reference>
<reference key="2">
    <citation type="journal article" date="2001" name="DNA Res.">
        <title>Complete genome sequence of enterohemorrhagic Escherichia coli O157:H7 and genomic comparison with a laboratory strain K-12.</title>
        <authorList>
            <person name="Hayashi T."/>
            <person name="Makino K."/>
            <person name="Ohnishi M."/>
            <person name="Kurokawa K."/>
            <person name="Ishii K."/>
            <person name="Yokoyama K."/>
            <person name="Han C.-G."/>
            <person name="Ohtsubo E."/>
            <person name="Nakayama K."/>
            <person name="Murata T."/>
            <person name="Tanaka M."/>
            <person name="Tobe T."/>
            <person name="Iida T."/>
            <person name="Takami H."/>
            <person name="Honda T."/>
            <person name="Sasakawa C."/>
            <person name="Ogasawara N."/>
            <person name="Yasunaga T."/>
            <person name="Kuhara S."/>
            <person name="Shiba T."/>
            <person name="Hattori M."/>
            <person name="Shinagawa H."/>
        </authorList>
    </citation>
    <scope>NUCLEOTIDE SEQUENCE [LARGE SCALE GENOMIC DNA]</scope>
    <source>
        <strain>O157:H7 / Sakai / RIMD 0509952 / EHEC</strain>
    </source>
</reference>
<evidence type="ECO:0000250" key="1">
    <source>
        <dbReference type="UniProtKB" id="P0AC00"/>
    </source>
</evidence>
<evidence type="ECO:0000255" key="2">
    <source>
        <dbReference type="PROSITE-ProRule" id="PRU00797"/>
    </source>
</evidence>
<evidence type="ECO:0000305" key="3"/>
<proteinExistence type="inferred from homology"/>
<organism>
    <name type="scientific">Escherichia coli O157:H7</name>
    <dbReference type="NCBI Taxonomy" id="83334"/>
    <lineage>
        <taxon>Bacteria</taxon>
        <taxon>Pseudomonadati</taxon>
        <taxon>Pseudomonadota</taxon>
        <taxon>Gammaproteobacteria</taxon>
        <taxon>Enterobacterales</taxon>
        <taxon>Enterobacteriaceae</taxon>
        <taxon>Escherichia</taxon>
    </lineage>
</organism>
<accession>Q8X844</accession>
<feature type="chain" id="PRO_0000136594" description="Fructoselysine 6-phosphate deglycase">
    <location>
        <begin position="1"/>
        <end position="340"/>
    </location>
</feature>
<feature type="domain" description="SIS 1" evidence="2">
    <location>
        <begin position="35"/>
        <end position="169"/>
    </location>
</feature>
<feature type="domain" description="SIS 2" evidence="2">
    <location>
        <begin position="201"/>
        <end position="331"/>
    </location>
</feature>
<protein>
    <recommendedName>
        <fullName evidence="1">Fructoselysine 6-phosphate deglycase</fullName>
        <ecNumber evidence="1">3.5.-.-</ecNumber>
    </recommendedName>
</protein>
<name>FRLB_ECO57</name>
<dbReference type="EC" id="3.5.-.-" evidence="1"/>
<dbReference type="EMBL" id="AE005174">
    <property type="protein sequence ID" value="AAG58479.1"/>
    <property type="status" value="ALT_INIT"/>
    <property type="molecule type" value="Genomic_DNA"/>
</dbReference>
<dbReference type="EMBL" id="BA000007">
    <property type="protein sequence ID" value="BAB37645.1"/>
    <property type="status" value="ALT_INIT"/>
    <property type="molecule type" value="Genomic_DNA"/>
</dbReference>
<dbReference type="PIR" id="C86002">
    <property type="entry name" value="C86002"/>
</dbReference>
<dbReference type="PIR" id="F91156">
    <property type="entry name" value="F91156"/>
</dbReference>
<dbReference type="RefSeq" id="NP_312249.2">
    <property type="nucleotide sequence ID" value="NC_002695.1"/>
</dbReference>
<dbReference type="RefSeq" id="WP_001301824.1">
    <property type="nucleotide sequence ID" value="NZ_VOAI01000004.1"/>
</dbReference>
<dbReference type="SMR" id="Q8X844"/>
<dbReference type="STRING" id="155864.Z4732"/>
<dbReference type="GeneID" id="915923"/>
<dbReference type="KEGG" id="ece:Z4732"/>
<dbReference type="KEGG" id="ecs:ECs_4222"/>
<dbReference type="PATRIC" id="fig|386585.9.peg.4407"/>
<dbReference type="eggNOG" id="COG2222">
    <property type="taxonomic scope" value="Bacteria"/>
</dbReference>
<dbReference type="HOGENOM" id="CLU_012520_3_0_6"/>
<dbReference type="OMA" id="ILMEMQW"/>
<dbReference type="UniPathway" id="UPA00784">
    <property type="reaction ID" value="UER00770"/>
</dbReference>
<dbReference type="Proteomes" id="UP000000558">
    <property type="component" value="Chromosome"/>
</dbReference>
<dbReference type="Proteomes" id="UP000002519">
    <property type="component" value="Chromosome"/>
</dbReference>
<dbReference type="GO" id="GO:0097367">
    <property type="term" value="F:carbohydrate derivative binding"/>
    <property type="evidence" value="ECO:0007669"/>
    <property type="project" value="InterPro"/>
</dbReference>
<dbReference type="GO" id="GO:0004360">
    <property type="term" value="F:glutamine-fructose-6-phosphate transaminase (isomerizing) activity"/>
    <property type="evidence" value="ECO:0007669"/>
    <property type="project" value="TreeGrafter"/>
</dbReference>
<dbReference type="GO" id="GO:0016787">
    <property type="term" value="F:hydrolase activity"/>
    <property type="evidence" value="ECO:0007669"/>
    <property type="project" value="UniProtKB-KW"/>
</dbReference>
<dbReference type="GO" id="GO:0006002">
    <property type="term" value="P:fructose 6-phosphate metabolic process"/>
    <property type="evidence" value="ECO:0007669"/>
    <property type="project" value="TreeGrafter"/>
</dbReference>
<dbReference type="GO" id="GO:0006487">
    <property type="term" value="P:protein N-linked glycosylation"/>
    <property type="evidence" value="ECO:0007669"/>
    <property type="project" value="TreeGrafter"/>
</dbReference>
<dbReference type="GO" id="GO:0006047">
    <property type="term" value="P:UDP-N-acetylglucosamine metabolic process"/>
    <property type="evidence" value="ECO:0007669"/>
    <property type="project" value="TreeGrafter"/>
</dbReference>
<dbReference type="CDD" id="cd05009">
    <property type="entry name" value="SIS_GlmS_GlmD_2"/>
    <property type="match status" value="1"/>
</dbReference>
<dbReference type="FunFam" id="3.40.50.10490:FF:000034">
    <property type="entry name" value="Fructoselysine 6-phosphate deglycase"/>
    <property type="match status" value="1"/>
</dbReference>
<dbReference type="Gene3D" id="3.40.50.10490">
    <property type="entry name" value="Glucose-6-phosphate isomerase like protein, domain 1"/>
    <property type="match status" value="2"/>
</dbReference>
<dbReference type="InterPro" id="IPR035490">
    <property type="entry name" value="GlmS/FrlB_SIS"/>
</dbReference>
<dbReference type="InterPro" id="IPR001347">
    <property type="entry name" value="SIS_dom"/>
</dbReference>
<dbReference type="InterPro" id="IPR046348">
    <property type="entry name" value="SIS_dom_sf"/>
</dbReference>
<dbReference type="NCBIfam" id="NF008481">
    <property type="entry name" value="PRK11382.1"/>
    <property type="match status" value="1"/>
</dbReference>
<dbReference type="PANTHER" id="PTHR10937:SF14">
    <property type="entry name" value="FRUCTOSELYSINE 6-PHOSPHATE DEGLYCASE"/>
    <property type="match status" value="1"/>
</dbReference>
<dbReference type="PANTHER" id="PTHR10937">
    <property type="entry name" value="GLUCOSAMINE--FRUCTOSE-6-PHOSPHATE AMINOTRANSFERASE, ISOMERIZING"/>
    <property type="match status" value="1"/>
</dbReference>
<dbReference type="Pfam" id="PF01380">
    <property type="entry name" value="SIS"/>
    <property type="match status" value="1"/>
</dbReference>
<dbReference type="SUPFAM" id="SSF53697">
    <property type="entry name" value="SIS domain"/>
    <property type="match status" value="1"/>
</dbReference>
<dbReference type="PROSITE" id="PS51464">
    <property type="entry name" value="SIS"/>
    <property type="match status" value="2"/>
</dbReference>
<comment type="function">
    <text evidence="1">Catalyzes the reversible conversion of fructoselysine 6-phosphate to glucose 6-phosphate and lysine. Functions in a fructoselysine degradation pathway that allows E.coli to grow on fructoselysine or psicoselysine.</text>
</comment>
<comment type="catalytic activity">
    <reaction evidence="1">
        <text>N(6)-(6-phospho-D-fructosyl)-L-lysine + H2O = D-glucose 6-phosphate + L-lysine</text>
        <dbReference type="Rhea" id="RHEA:28382"/>
        <dbReference type="ChEBI" id="CHEBI:15377"/>
        <dbReference type="ChEBI" id="CHEBI:32551"/>
        <dbReference type="ChEBI" id="CHEBI:61392"/>
        <dbReference type="ChEBI" id="CHEBI:61548"/>
    </reaction>
</comment>
<comment type="pathway">
    <text evidence="1">Carbohydrate metabolism; fructoselysine degradation; D-glucose 6-phosphate and lysine from fructoselysine: step 2/2.</text>
</comment>
<comment type="subunit">
    <text evidence="1">Homododecamer.</text>
</comment>
<comment type="sequence caution" evidence="3">
    <conflict type="erroneous initiation">
        <sequence resource="EMBL-CDS" id="AAG58479"/>
    </conflict>
</comment>
<comment type="sequence caution" evidence="3">
    <conflict type="erroneous initiation">
        <sequence resource="EMBL-CDS" id="BAB37645"/>
    </conflict>
</comment>
<keyword id="KW-0378">Hydrolase</keyword>
<keyword id="KW-1185">Reference proteome</keyword>
<keyword id="KW-0677">Repeat</keyword>
<gene>
    <name type="primary">frlB</name>
    <name type="ordered locus">Z4732</name>
    <name type="ordered locus">ECs4222</name>
</gene>
<sequence>MLDIDKSTVDFLVTENMVQEVEKVLSHDVPLVHTIVEEMVKRDIDRIYFVACGSPLNAAQTAKHLADRFSDLQVYAISGWEFCDNTPYRLDARCAVIGVSDYGKTEEVIKALELGRACGALTAAFTKRADSPITSAAEFSIDYQADCIWEIHLLLCYSVVLEMITRLAPHAEIGKIKNDLKQLPNALGYLVRTWEEKGRQLGELASQWPMIYTVAAGPLRPLGYKEGIVTLMEFTWTHGCVIESGEFRHGPLEIVEPGVPFLFLLGNDESRHTTERAINFVKQRTDNVIVIDYAAISQGLHPWLAPFLMFVPMEWLCYYLSIYKDHNPDERRYYGGLVEY</sequence>